<gene>
    <name evidence="1" type="primary">LGALS1</name>
</gene>
<comment type="function">
    <text evidence="1 5">Lectin that binds beta-galactoside and a wide array of complex carbohydrates. Plays a role in regulating apoptosis, cell proliferation and cell differentiation. Inhibits CD45 protein phosphatase activity and therefore the dephosphorylation of Lyn kinase. Strong inducer of T-cell apoptosis.</text>
</comment>
<comment type="subunit">
    <text evidence="1 5">Homodimer. Binds LGALS3BP. Interacts with CD2, CD3, CD4, CD6, CD7, CD43, ALCAM and CD45. Interacts with laminin (via poly-N-acetyllactosamine). Interacts with SUSD2. Interacts with cargo receptor TMED10; the interaction mediates the translocation from the cytoplasm into the ERGIC (endoplasmic reticulum-Golgi intermediate compartment) and thereby secretion (By similarity).</text>
</comment>
<comment type="subcellular location">
    <subcellularLocation>
        <location evidence="1">Secreted</location>
        <location evidence="1">Extracellular space</location>
        <location evidence="1">Extracellular matrix</location>
    </subcellularLocation>
    <subcellularLocation>
        <location evidence="1">Cytoplasm</location>
    </subcellularLocation>
    <subcellularLocation>
        <location evidence="1">Secreted</location>
    </subcellularLocation>
    <text evidence="1">Can be secreted; the secretion is dependent on protein unfolding and facilitated by the cargo receptor TMED10; it results in protein translocation from the cytoplasm into the ERGIC (endoplasmic reticulum-Golgi intermediate compartment) followed by vesicle entry and secretion.</text>
</comment>
<comment type="PTM">
    <text evidence="5">The N-terminus is blocked.</text>
</comment>
<dbReference type="SMR" id="C0HJQ1"/>
<dbReference type="GO" id="GO:0005737">
    <property type="term" value="C:cytoplasm"/>
    <property type="evidence" value="ECO:0007669"/>
    <property type="project" value="UniProtKB-SubCell"/>
</dbReference>
<dbReference type="GO" id="GO:0005615">
    <property type="term" value="C:extracellular space"/>
    <property type="evidence" value="ECO:0007669"/>
    <property type="project" value="TreeGrafter"/>
</dbReference>
<dbReference type="GO" id="GO:0030395">
    <property type="term" value="F:lactose binding"/>
    <property type="evidence" value="ECO:0007669"/>
    <property type="project" value="TreeGrafter"/>
</dbReference>
<dbReference type="GO" id="GO:0043236">
    <property type="term" value="F:laminin binding"/>
    <property type="evidence" value="ECO:0007669"/>
    <property type="project" value="TreeGrafter"/>
</dbReference>
<dbReference type="GO" id="GO:0006915">
    <property type="term" value="P:apoptotic process"/>
    <property type="evidence" value="ECO:0007669"/>
    <property type="project" value="UniProtKB-KW"/>
</dbReference>
<dbReference type="CDD" id="cd00070">
    <property type="entry name" value="GLECT"/>
    <property type="match status" value="1"/>
</dbReference>
<dbReference type="FunFam" id="2.60.120.200:FF:000021">
    <property type="entry name" value="Galectin"/>
    <property type="match status" value="1"/>
</dbReference>
<dbReference type="Gene3D" id="2.60.120.200">
    <property type="match status" value="1"/>
</dbReference>
<dbReference type="InterPro" id="IPR013320">
    <property type="entry name" value="ConA-like_dom_sf"/>
</dbReference>
<dbReference type="InterPro" id="IPR044156">
    <property type="entry name" value="Galectin-like"/>
</dbReference>
<dbReference type="InterPro" id="IPR001079">
    <property type="entry name" value="Galectin_CRD"/>
</dbReference>
<dbReference type="PANTHER" id="PTHR11346">
    <property type="entry name" value="GALECTIN"/>
    <property type="match status" value="1"/>
</dbReference>
<dbReference type="PANTHER" id="PTHR11346:SF97">
    <property type="entry name" value="GALECTIN-1"/>
    <property type="match status" value="1"/>
</dbReference>
<dbReference type="Pfam" id="PF00337">
    <property type="entry name" value="Gal-bind_lectin"/>
    <property type="match status" value="1"/>
</dbReference>
<dbReference type="SMART" id="SM00908">
    <property type="entry name" value="Gal-bind_lectin"/>
    <property type="match status" value="1"/>
</dbReference>
<dbReference type="SMART" id="SM00276">
    <property type="entry name" value="GLECT"/>
    <property type="match status" value="1"/>
</dbReference>
<dbReference type="SUPFAM" id="SSF49899">
    <property type="entry name" value="Concanavalin A-like lectins/glucanases"/>
    <property type="match status" value="1"/>
</dbReference>
<dbReference type="PROSITE" id="PS51304">
    <property type="entry name" value="GALECTIN"/>
    <property type="match status" value="1"/>
</dbReference>
<organism evidence="6">
    <name type="scientific">Bubalus bubalis</name>
    <name type="common">Domestic water buffalo</name>
    <dbReference type="NCBI Taxonomy" id="89462"/>
    <lineage>
        <taxon>Eukaryota</taxon>
        <taxon>Metazoa</taxon>
        <taxon>Chordata</taxon>
        <taxon>Craniata</taxon>
        <taxon>Vertebrata</taxon>
        <taxon>Euteleostomi</taxon>
        <taxon>Mammalia</taxon>
        <taxon>Eutheria</taxon>
        <taxon>Laurasiatheria</taxon>
        <taxon>Artiodactyla</taxon>
        <taxon>Ruminantia</taxon>
        <taxon>Pecora</taxon>
        <taxon>Bovidae</taxon>
        <taxon>Bovinae</taxon>
        <taxon>Bubalus</taxon>
    </lineage>
</organism>
<proteinExistence type="evidence at protein level"/>
<sequence>MACGLVASNLNLKPGECLRVRGEVAPDAKSFLLNLGKDDNNLCLHFNPRFNAHGDINTIVCNSKDGGAWGAEQREVAFPFQPGSVVEVCISFNQADLTVKLPDGHEFKFPNRLNLEAINYMSAGGDFKIKCVAFD</sequence>
<name>LEG1_BUBBU</name>
<keyword id="KW-0007">Acetylation</keyword>
<keyword id="KW-0053">Apoptosis</keyword>
<keyword id="KW-0963">Cytoplasm</keyword>
<keyword id="KW-0903">Direct protein sequencing</keyword>
<keyword id="KW-0272">Extracellular matrix</keyword>
<keyword id="KW-0430">Lectin</keyword>
<keyword id="KW-0597">Phosphoprotein</keyword>
<keyword id="KW-0964">Secreted</keyword>
<feature type="initiator methionine" description="Removed" evidence="1">
    <location>
        <position position="1"/>
    </location>
</feature>
<feature type="chain" id="PRO_0000431835" description="Galectin-1" evidence="5">
    <location>
        <begin position="2"/>
        <end position="135"/>
    </location>
</feature>
<feature type="domain" description="Galectin" evidence="4">
    <location>
        <begin position="4"/>
        <end position="135"/>
    </location>
</feature>
<feature type="binding site" evidence="1">
    <location>
        <begin position="45"/>
        <end position="49"/>
    </location>
    <ligand>
        <name>a beta-D-galactoside</name>
        <dbReference type="ChEBI" id="CHEBI:28034"/>
    </ligand>
</feature>
<feature type="binding site" evidence="1">
    <location>
        <position position="53"/>
    </location>
    <ligand>
        <name>a beta-D-galactoside</name>
        <dbReference type="ChEBI" id="CHEBI:28034"/>
    </ligand>
</feature>
<feature type="binding site" evidence="1">
    <location>
        <position position="62"/>
    </location>
    <ligand>
        <name>a beta-D-galactoside</name>
        <dbReference type="ChEBI" id="CHEBI:28034"/>
    </ligand>
</feature>
<feature type="binding site" evidence="1">
    <location>
        <begin position="69"/>
        <end position="72"/>
    </location>
    <ligand>
        <name>a beta-D-galactoside</name>
        <dbReference type="ChEBI" id="CHEBI:28034"/>
    </ligand>
</feature>
<feature type="modified residue" description="N-acetylalanine" evidence="1">
    <location>
        <position position="2"/>
    </location>
</feature>
<feature type="modified residue" description="N6-acetyllysine" evidence="3">
    <location>
        <position position="13"/>
    </location>
</feature>
<feature type="modified residue" description="N6-acetyllysine" evidence="1">
    <location>
        <position position="29"/>
    </location>
</feature>
<feature type="modified residue" description="Phosphoserine" evidence="1">
    <location>
        <position position="30"/>
    </location>
</feature>
<feature type="modified residue" description="N6-acetyllysine; alternate" evidence="3">
    <location>
        <position position="108"/>
    </location>
</feature>
<feature type="modified residue" description="N6-succinyllysine; alternate" evidence="3">
    <location>
        <position position="108"/>
    </location>
</feature>
<feature type="modified residue" description="N6-acetyllysine" evidence="3">
    <location>
        <position position="128"/>
    </location>
</feature>
<accession>C0HJQ1</accession>
<evidence type="ECO:0000250" key="1">
    <source>
        <dbReference type="UniProtKB" id="P09382"/>
    </source>
</evidence>
<evidence type="ECO:0000250" key="2">
    <source>
        <dbReference type="UniProtKB" id="P11116"/>
    </source>
</evidence>
<evidence type="ECO:0000250" key="3">
    <source>
        <dbReference type="UniProtKB" id="P16045"/>
    </source>
</evidence>
<evidence type="ECO:0000255" key="4">
    <source>
        <dbReference type="PROSITE-ProRule" id="PRU00639"/>
    </source>
</evidence>
<evidence type="ECO:0000269" key="5">
    <source>
    </source>
</evidence>
<evidence type="ECO:0000303" key="6">
    <source>
    </source>
</evidence>
<evidence type="ECO:0000305" key="7"/>
<protein>
    <recommendedName>
        <fullName evidence="6">Galectin-1</fullName>
        <shortName evidence="2">Gal-1</shortName>
    </recommendedName>
    <alternativeName>
        <fullName evidence="2">14 kDa lectin</fullName>
    </alternativeName>
    <alternativeName>
        <fullName evidence="2">Beta-galactoside-binding lectin L-14-I</fullName>
    </alternativeName>
    <alternativeName>
        <fullName evidence="2">Galaptin</fullName>
    </alternativeName>
    <alternativeName>
        <fullName evidence="6">Heart galectin-1</fullName>
        <shortName evidence="6">BfHG-1</shortName>
    </alternativeName>
    <alternativeName>
        <fullName evidence="2">Lactose-binding lectin 1</fullName>
    </alternativeName>
    <alternativeName>
        <fullName evidence="2">Lectin galactoside-binding soluble 1</fullName>
    </alternativeName>
    <alternativeName>
        <fullName evidence="2">S-Lac lectin 1</fullName>
    </alternativeName>
</protein>
<reference evidence="7" key="1">
    <citation type="journal article" date="2010" name="Amino Acids">
        <title>Purification, characterization, structural analysis and protein chemistry of a buffalo heart galectin-1.</title>
        <authorList>
            <person name="Ashraf G.M."/>
            <person name="Rizvi S."/>
            <person name="Naqvi S."/>
            <person name="Suhail N."/>
            <person name="Bilal N."/>
            <person name="Hasan S."/>
            <person name="Tabish M."/>
            <person name="Banu N."/>
        </authorList>
    </citation>
    <scope>PROTEIN SEQUENCE OF 2-135</scope>
    <scope>FUNCTION</scope>
    <scope>SUBUNIT</scope>
    <scope>BLOCKAGE OF N-TERMINUS</scope>
    <source>
        <tissue evidence="6">Heart</tissue>
    </source>
</reference>